<proteinExistence type="inferred from homology"/>
<name>PEPT_SALCH</name>
<keyword id="KW-0031">Aminopeptidase</keyword>
<keyword id="KW-0963">Cytoplasm</keyword>
<keyword id="KW-0378">Hydrolase</keyword>
<keyword id="KW-0479">Metal-binding</keyword>
<keyword id="KW-0482">Metalloprotease</keyword>
<keyword id="KW-0645">Protease</keyword>
<keyword id="KW-0862">Zinc</keyword>
<organism>
    <name type="scientific">Salmonella choleraesuis (strain SC-B67)</name>
    <dbReference type="NCBI Taxonomy" id="321314"/>
    <lineage>
        <taxon>Bacteria</taxon>
        <taxon>Pseudomonadati</taxon>
        <taxon>Pseudomonadota</taxon>
        <taxon>Gammaproteobacteria</taxon>
        <taxon>Enterobacterales</taxon>
        <taxon>Enterobacteriaceae</taxon>
        <taxon>Salmonella</taxon>
    </lineage>
</organism>
<gene>
    <name evidence="1" type="primary">pepT</name>
    <name type="ordered locus">SCH_1178</name>
</gene>
<feature type="chain" id="PRO_0000185309" description="Peptidase T">
    <location>
        <begin position="1"/>
        <end position="409"/>
    </location>
</feature>
<feature type="active site" evidence="1">
    <location>
        <position position="80"/>
    </location>
</feature>
<feature type="active site" description="Proton acceptor" evidence="1">
    <location>
        <position position="173"/>
    </location>
</feature>
<feature type="binding site" evidence="1">
    <location>
        <position position="78"/>
    </location>
    <ligand>
        <name>Zn(2+)</name>
        <dbReference type="ChEBI" id="CHEBI:29105"/>
        <label>1</label>
    </ligand>
</feature>
<feature type="binding site" evidence="1">
    <location>
        <position position="140"/>
    </location>
    <ligand>
        <name>Zn(2+)</name>
        <dbReference type="ChEBI" id="CHEBI:29105"/>
        <label>1</label>
    </ligand>
</feature>
<feature type="binding site" evidence="1">
    <location>
        <position position="140"/>
    </location>
    <ligand>
        <name>Zn(2+)</name>
        <dbReference type="ChEBI" id="CHEBI:29105"/>
        <label>2</label>
    </ligand>
</feature>
<feature type="binding site" evidence="1">
    <location>
        <position position="174"/>
    </location>
    <ligand>
        <name>Zn(2+)</name>
        <dbReference type="ChEBI" id="CHEBI:29105"/>
        <label>2</label>
    </ligand>
</feature>
<feature type="binding site" evidence="1">
    <location>
        <position position="196"/>
    </location>
    <ligand>
        <name>Zn(2+)</name>
        <dbReference type="ChEBI" id="CHEBI:29105"/>
        <label>1</label>
    </ligand>
</feature>
<feature type="binding site" evidence="1">
    <location>
        <position position="379"/>
    </location>
    <ligand>
        <name>Zn(2+)</name>
        <dbReference type="ChEBI" id="CHEBI:29105"/>
        <label>2</label>
    </ligand>
</feature>
<dbReference type="EC" id="3.4.11.4" evidence="1"/>
<dbReference type="EMBL" id="AE017220">
    <property type="protein sequence ID" value="AAX65084.1"/>
    <property type="molecule type" value="Genomic_DNA"/>
</dbReference>
<dbReference type="RefSeq" id="WP_000359414.1">
    <property type="nucleotide sequence ID" value="NC_006905.1"/>
</dbReference>
<dbReference type="SMR" id="Q57QC7"/>
<dbReference type="MEROPS" id="M20.003"/>
<dbReference type="KEGG" id="sec:SCH_1178"/>
<dbReference type="HOGENOM" id="CLU_053676_0_0_6"/>
<dbReference type="Proteomes" id="UP000000538">
    <property type="component" value="Chromosome"/>
</dbReference>
<dbReference type="GO" id="GO:0005829">
    <property type="term" value="C:cytosol"/>
    <property type="evidence" value="ECO:0007669"/>
    <property type="project" value="TreeGrafter"/>
</dbReference>
<dbReference type="GO" id="GO:0008237">
    <property type="term" value="F:metallopeptidase activity"/>
    <property type="evidence" value="ECO:0007669"/>
    <property type="project" value="UniProtKB-KW"/>
</dbReference>
<dbReference type="GO" id="GO:0045148">
    <property type="term" value="F:tripeptide aminopeptidase activity"/>
    <property type="evidence" value="ECO:0007669"/>
    <property type="project" value="UniProtKB-UniRule"/>
</dbReference>
<dbReference type="GO" id="GO:0008270">
    <property type="term" value="F:zinc ion binding"/>
    <property type="evidence" value="ECO:0007669"/>
    <property type="project" value="UniProtKB-UniRule"/>
</dbReference>
<dbReference type="GO" id="GO:0043171">
    <property type="term" value="P:peptide catabolic process"/>
    <property type="evidence" value="ECO:0007669"/>
    <property type="project" value="UniProtKB-UniRule"/>
</dbReference>
<dbReference type="GO" id="GO:0006508">
    <property type="term" value="P:proteolysis"/>
    <property type="evidence" value="ECO:0007669"/>
    <property type="project" value="UniProtKB-UniRule"/>
</dbReference>
<dbReference type="CDD" id="cd03892">
    <property type="entry name" value="M20_peptT"/>
    <property type="match status" value="1"/>
</dbReference>
<dbReference type="FunFam" id="3.30.70.360:FF:000002">
    <property type="entry name" value="Peptidase T"/>
    <property type="match status" value="1"/>
</dbReference>
<dbReference type="Gene3D" id="3.30.70.360">
    <property type="match status" value="1"/>
</dbReference>
<dbReference type="Gene3D" id="3.40.630.10">
    <property type="entry name" value="Zn peptidases"/>
    <property type="match status" value="1"/>
</dbReference>
<dbReference type="HAMAP" id="MF_00550">
    <property type="entry name" value="Aminopeptidase_M20"/>
    <property type="match status" value="1"/>
</dbReference>
<dbReference type="InterPro" id="IPR001261">
    <property type="entry name" value="ArgE/DapE_CS"/>
</dbReference>
<dbReference type="InterPro" id="IPR036264">
    <property type="entry name" value="Bact_exopeptidase_dim_dom"/>
</dbReference>
<dbReference type="InterPro" id="IPR002933">
    <property type="entry name" value="Peptidase_M20"/>
</dbReference>
<dbReference type="InterPro" id="IPR011650">
    <property type="entry name" value="Peptidase_M20_dimer"/>
</dbReference>
<dbReference type="InterPro" id="IPR010161">
    <property type="entry name" value="Peptidase_M20B"/>
</dbReference>
<dbReference type="NCBIfam" id="TIGR01882">
    <property type="entry name" value="peptidase-T"/>
    <property type="match status" value="1"/>
</dbReference>
<dbReference type="NCBIfam" id="NF003976">
    <property type="entry name" value="PRK05469.1"/>
    <property type="match status" value="1"/>
</dbReference>
<dbReference type="NCBIfam" id="NF009920">
    <property type="entry name" value="PRK13381.1"/>
    <property type="match status" value="1"/>
</dbReference>
<dbReference type="PANTHER" id="PTHR42994">
    <property type="entry name" value="PEPTIDASE T"/>
    <property type="match status" value="1"/>
</dbReference>
<dbReference type="PANTHER" id="PTHR42994:SF1">
    <property type="entry name" value="PEPTIDASE T"/>
    <property type="match status" value="1"/>
</dbReference>
<dbReference type="Pfam" id="PF07687">
    <property type="entry name" value="M20_dimer"/>
    <property type="match status" value="1"/>
</dbReference>
<dbReference type="Pfam" id="PF01546">
    <property type="entry name" value="Peptidase_M20"/>
    <property type="match status" value="1"/>
</dbReference>
<dbReference type="PIRSF" id="PIRSF037215">
    <property type="entry name" value="Peptidase_M20B"/>
    <property type="match status" value="1"/>
</dbReference>
<dbReference type="SUPFAM" id="SSF55031">
    <property type="entry name" value="Bacterial exopeptidase dimerisation domain"/>
    <property type="match status" value="1"/>
</dbReference>
<dbReference type="SUPFAM" id="SSF53187">
    <property type="entry name" value="Zn-dependent exopeptidases"/>
    <property type="match status" value="1"/>
</dbReference>
<dbReference type="PROSITE" id="PS00758">
    <property type="entry name" value="ARGE_DAPE_CPG2_1"/>
    <property type="match status" value="1"/>
</dbReference>
<dbReference type="PROSITE" id="PS00759">
    <property type="entry name" value="ARGE_DAPE_CPG2_2"/>
    <property type="match status" value="1"/>
</dbReference>
<protein>
    <recommendedName>
        <fullName evidence="1">Peptidase T</fullName>
        <ecNumber evidence="1">3.4.11.4</ecNumber>
    </recommendedName>
    <alternativeName>
        <fullName evidence="1">Aminotripeptidase</fullName>
        <shortName evidence="1">Tripeptidase</shortName>
    </alternativeName>
    <alternativeName>
        <fullName evidence="1">Tripeptide aminopeptidase</fullName>
    </alternativeName>
</protein>
<accession>Q57QC7</accession>
<evidence type="ECO:0000255" key="1">
    <source>
        <dbReference type="HAMAP-Rule" id="MF_00550"/>
    </source>
</evidence>
<comment type="function">
    <text evidence="1">Cleaves the N-terminal amino acid of tripeptides.</text>
</comment>
<comment type="catalytic activity">
    <reaction evidence="1">
        <text>Release of the N-terminal residue from a tripeptide.</text>
        <dbReference type="EC" id="3.4.11.4"/>
    </reaction>
</comment>
<comment type="cofactor">
    <cofactor evidence="1">
        <name>Zn(2+)</name>
        <dbReference type="ChEBI" id="CHEBI:29105"/>
    </cofactor>
    <text evidence="1">Binds 2 Zn(2+) ions per subunit.</text>
</comment>
<comment type="subcellular location">
    <subcellularLocation>
        <location evidence="1">Cytoplasm</location>
    </subcellularLocation>
</comment>
<comment type="similarity">
    <text evidence="1">Belongs to the peptidase M20B family.</text>
</comment>
<sequence>MDKLLERFLHYVSLDTQSKSGVRQVPSTEGQWKLLRLLKQQLEEMGLVNITLSEKGTLMATLPANVEGDIPAIGFISHVDTSPDFSGKNVNPQIVENYRGGDIALGIGDEVLSPVMFPVLHQLLGQTLITTDGKTLLGADDKAGVAEIMTALAVLKGNPIPHGEIKVAFTPDEEVGKGAKHFDVEAFGAQWAYTVDGGGVGELEFENFNAASVNIKIVGNNVHPGTAKGVMVNALSLAARIHAEVPADEAPETTEGYEGFYHLASMKGTVDRAEMHYIIRDFDRKQFEARKRKMMEIAKKVGKGLHPDCYIELVIEDSYYNMREKVVEHPHILDIAQQAMRDCHITPEMKPIRGGTDGAQLSFMGLPCPNLFTGGYNYHGKHEFVTLEGMEKAVQVIVRIAELTAKRGQ</sequence>
<reference key="1">
    <citation type="journal article" date="2005" name="Nucleic Acids Res.">
        <title>The genome sequence of Salmonella enterica serovar Choleraesuis, a highly invasive and resistant zoonotic pathogen.</title>
        <authorList>
            <person name="Chiu C.-H."/>
            <person name="Tang P."/>
            <person name="Chu C."/>
            <person name="Hu S."/>
            <person name="Bao Q."/>
            <person name="Yu J."/>
            <person name="Chou Y.-Y."/>
            <person name="Wang H.-S."/>
            <person name="Lee Y.-S."/>
        </authorList>
    </citation>
    <scope>NUCLEOTIDE SEQUENCE [LARGE SCALE GENOMIC DNA]</scope>
    <source>
        <strain>SC-B67</strain>
    </source>
</reference>